<reference key="1">
    <citation type="journal article" date="2010" name="Genome Biol. Evol.">
        <title>Continuing evolution of Burkholderia mallei through genome reduction and large-scale rearrangements.</title>
        <authorList>
            <person name="Losada L."/>
            <person name="Ronning C.M."/>
            <person name="DeShazer D."/>
            <person name="Woods D."/>
            <person name="Fedorova N."/>
            <person name="Kim H.S."/>
            <person name="Shabalina S.A."/>
            <person name="Pearson T.R."/>
            <person name="Brinkac L."/>
            <person name="Tan P."/>
            <person name="Nandi T."/>
            <person name="Crabtree J."/>
            <person name="Badger J."/>
            <person name="Beckstrom-Sternberg S."/>
            <person name="Saqib M."/>
            <person name="Schutzer S.E."/>
            <person name="Keim P."/>
            <person name="Nierman W.C."/>
        </authorList>
    </citation>
    <scope>NUCLEOTIDE SEQUENCE [LARGE SCALE GENOMIC DNA]</scope>
    <source>
        <strain>668</strain>
    </source>
</reference>
<proteinExistence type="inferred from homology"/>
<organism>
    <name type="scientific">Burkholderia pseudomallei (strain 668)</name>
    <dbReference type="NCBI Taxonomy" id="320373"/>
    <lineage>
        <taxon>Bacteria</taxon>
        <taxon>Pseudomonadati</taxon>
        <taxon>Pseudomonadota</taxon>
        <taxon>Betaproteobacteria</taxon>
        <taxon>Burkholderiales</taxon>
        <taxon>Burkholderiaceae</taxon>
        <taxon>Burkholderia</taxon>
        <taxon>pseudomallei group</taxon>
    </lineage>
</organism>
<comment type="function">
    <text evidence="1">Modifies, by uridylylation and deuridylylation, the PII regulatory proteins (GlnB and homologs), in response to the nitrogen status of the cell that GlnD senses through the glutamine level. Under low glutamine levels, catalyzes the conversion of the PII proteins and UTP to PII-UMP and PPi, while under higher glutamine levels, GlnD hydrolyzes PII-UMP to PII and UMP (deuridylylation). Thus, controls uridylylation state and activity of the PII proteins, and plays an important role in the regulation of nitrogen assimilation and metabolism.</text>
</comment>
<comment type="catalytic activity">
    <reaction evidence="1">
        <text>[protein-PII]-L-tyrosine + UTP = [protein-PII]-uridylyl-L-tyrosine + diphosphate</text>
        <dbReference type="Rhea" id="RHEA:13673"/>
        <dbReference type="Rhea" id="RHEA-COMP:12147"/>
        <dbReference type="Rhea" id="RHEA-COMP:12148"/>
        <dbReference type="ChEBI" id="CHEBI:33019"/>
        <dbReference type="ChEBI" id="CHEBI:46398"/>
        <dbReference type="ChEBI" id="CHEBI:46858"/>
        <dbReference type="ChEBI" id="CHEBI:90602"/>
        <dbReference type="EC" id="2.7.7.59"/>
    </reaction>
</comment>
<comment type="catalytic activity">
    <reaction evidence="1">
        <text>[protein-PII]-uridylyl-L-tyrosine + H2O = [protein-PII]-L-tyrosine + UMP + H(+)</text>
        <dbReference type="Rhea" id="RHEA:48600"/>
        <dbReference type="Rhea" id="RHEA-COMP:12147"/>
        <dbReference type="Rhea" id="RHEA-COMP:12148"/>
        <dbReference type="ChEBI" id="CHEBI:15377"/>
        <dbReference type="ChEBI" id="CHEBI:15378"/>
        <dbReference type="ChEBI" id="CHEBI:46858"/>
        <dbReference type="ChEBI" id="CHEBI:57865"/>
        <dbReference type="ChEBI" id="CHEBI:90602"/>
    </reaction>
</comment>
<comment type="cofactor">
    <cofactor evidence="1">
        <name>Mg(2+)</name>
        <dbReference type="ChEBI" id="CHEBI:18420"/>
    </cofactor>
</comment>
<comment type="activity regulation">
    <text evidence="1">Uridylyltransferase (UTase) activity is inhibited by glutamine, while glutamine activates uridylyl-removing (UR) activity.</text>
</comment>
<comment type="domain">
    <text evidence="1">Has four distinct domains: an N-terminal nucleotidyltransferase (NT) domain responsible for UTase activity, a central HD domain that encodes UR activity, and two C-terminal ACT domains that seem to have a role in glutamine sensing.</text>
</comment>
<comment type="similarity">
    <text evidence="1">Belongs to the GlnD family.</text>
</comment>
<gene>
    <name evidence="1" type="primary">glnD</name>
    <name type="ordered locus">BURPS668_2439</name>
</gene>
<protein>
    <recommendedName>
        <fullName evidence="1">Bifunctional uridylyltransferase/uridylyl-removing enzyme</fullName>
        <shortName evidence="1">UTase/UR</shortName>
    </recommendedName>
    <alternativeName>
        <fullName evidence="1">Bifunctional [protein-PII] modification enzyme</fullName>
    </alternativeName>
    <alternativeName>
        <fullName evidence="1">Bifunctional nitrogen sensor protein</fullName>
    </alternativeName>
    <domain>
        <recommendedName>
            <fullName evidence="1">[Protein-PII] uridylyltransferase</fullName>
            <shortName evidence="1">PII uridylyltransferase</shortName>
            <shortName evidence="1">UTase</shortName>
            <ecNumber evidence="1">2.7.7.59</ecNumber>
        </recommendedName>
    </domain>
    <domain>
        <recommendedName>
            <fullName evidence="1">[Protein-PII]-UMP uridylyl-removing enzyme</fullName>
            <shortName evidence="1">UR</shortName>
            <ecNumber evidence="1">3.1.4.-</ecNumber>
        </recommendedName>
    </domain>
</protein>
<sequence length="858" mass="96750">MSASVAEPPPALSRKAEFKAAKAELLARFKSANHVTPLMHALSRATDDALRSLWQECGLPATLALVAVGGFGRGELSPHSDVDILVLLPDAHASELDERIERFIGMAWDLGLEIGSSVRTVDQCIEEASHDVTVQTSLLEARRIVGSTALFERFMLRYREALDARAFFQAKVLEMRQRHAKFQDTPYSLEPNVKESPGGLRDLQTILWIARAAGFGSSWRELDTRGLITDREARELRRNEGFLKTLRARLHVIAGRRQDILVFDLQTQAAESFGYQPTSAKRASEQLMRRYYWAAKAVTQLATILIQNIEAQLFPATSGVTRVLSPGRFVEKQGMLEIAADDVFERHPDAILEAFLLYEATRGVKGLSARTLRALYNSRDVMNNAWRRDPRNRHTFMQILQQPEGITHAFRLMNQTSVLGRYLLNFRRIVGQMQHDLYHVYTVDQHILMVLRNIRRFAVAEHAHEYPFCSQLIVNFERPWVLYVAALFHDIAKGRGGDHSALGMADARRFCREHGIEGDDAALVVWLVQHHLTMSQVAQKQDTSDPVVIKRFAELVGSERRLTALYLLTVADIRGTSPKVWNTWKGKLLEDLYRATLAVLGGAQPDAHSELKTRQEEALALLRLETVPPDAHRALWDQLDVGYFLRHDAADIAWQTRVLYRHVAADTAIVRARPSPVGDALQVLVYVKDRSDLFAGICAYFDRNGLSVLDARVNTTRHGYALDNFIVTQTEHDVQYRDIANLVEQQLAARLAESAPLPEPSKGRLSRLSRTFPITPRVDLRADERGQYYILSVSANDRPGLLYSIARVLAEHRVGVHAARINTLGERVEDVFMLDGTGLSDNRLQIQVETELLRAIAV</sequence>
<name>GLND_BURP6</name>
<keyword id="KW-0378">Hydrolase</keyword>
<keyword id="KW-0460">Magnesium</keyword>
<keyword id="KW-0511">Multifunctional enzyme</keyword>
<keyword id="KW-0548">Nucleotidyltransferase</keyword>
<keyword id="KW-0677">Repeat</keyword>
<keyword id="KW-0808">Transferase</keyword>
<accession>A3NAV0</accession>
<evidence type="ECO:0000255" key="1">
    <source>
        <dbReference type="HAMAP-Rule" id="MF_00277"/>
    </source>
</evidence>
<evidence type="ECO:0000255" key="2">
    <source>
        <dbReference type="PROSITE-ProRule" id="PRU01175"/>
    </source>
</evidence>
<dbReference type="EC" id="2.7.7.59" evidence="1"/>
<dbReference type="EC" id="3.1.4.-" evidence="1"/>
<dbReference type="EMBL" id="CP000570">
    <property type="protein sequence ID" value="ABN81784.1"/>
    <property type="molecule type" value="Genomic_DNA"/>
</dbReference>
<dbReference type="RefSeq" id="WP_004193976.1">
    <property type="nucleotide sequence ID" value="NC_009074.1"/>
</dbReference>
<dbReference type="SMR" id="A3NAV0"/>
<dbReference type="KEGG" id="bpd:BURPS668_2439"/>
<dbReference type="HOGENOM" id="CLU_012833_0_0_4"/>
<dbReference type="GO" id="GO:0008773">
    <property type="term" value="F:[protein-PII] uridylyltransferase activity"/>
    <property type="evidence" value="ECO:0007669"/>
    <property type="project" value="UniProtKB-UniRule"/>
</dbReference>
<dbReference type="GO" id="GO:0008081">
    <property type="term" value="F:phosphoric diester hydrolase activity"/>
    <property type="evidence" value="ECO:0007669"/>
    <property type="project" value="UniProtKB-UniRule"/>
</dbReference>
<dbReference type="GO" id="GO:0006808">
    <property type="term" value="P:regulation of nitrogen utilization"/>
    <property type="evidence" value="ECO:0007669"/>
    <property type="project" value="UniProtKB-UniRule"/>
</dbReference>
<dbReference type="CDD" id="cd04899">
    <property type="entry name" value="ACT_ACR-UUR-like_2"/>
    <property type="match status" value="1"/>
</dbReference>
<dbReference type="CDD" id="cd04900">
    <property type="entry name" value="ACT_UUR-like_1"/>
    <property type="match status" value="1"/>
</dbReference>
<dbReference type="CDD" id="cd00077">
    <property type="entry name" value="HDc"/>
    <property type="match status" value="1"/>
</dbReference>
<dbReference type="CDD" id="cd05401">
    <property type="entry name" value="NT_GlnE_GlnD_like"/>
    <property type="match status" value="1"/>
</dbReference>
<dbReference type="Gene3D" id="3.30.70.260">
    <property type="match status" value="1"/>
</dbReference>
<dbReference type="Gene3D" id="3.30.460.10">
    <property type="entry name" value="Beta Polymerase, domain 2"/>
    <property type="match status" value="1"/>
</dbReference>
<dbReference type="Gene3D" id="1.10.3210.10">
    <property type="entry name" value="Hypothetical protein af1432"/>
    <property type="match status" value="1"/>
</dbReference>
<dbReference type="Gene3D" id="1.20.120.330">
    <property type="entry name" value="Nucleotidyltransferases domain 2"/>
    <property type="match status" value="1"/>
</dbReference>
<dbReference type="HAMAP" id="MF_00277">
    <property type="entry name" value="PII_uridylyl_transf"/>
    <property type="match status" value="1"/>
</dbReference>
<dbReference type="InterPro" id="IPR045865">
    <property type="entry name" value="ACT-like_dom_sf"/>
</dbReference>
<dbReference type="InterPro" id="IPR002912">
    <property type="entry name" value="ACT_dom"/>
</dbReference>
<dbReference type="InterPro" id="IPR003607">
    <property type="entry name" value="HD/PDEase_dom"/>
</dbReference>
<dbReference type="InterPro" id="IPR006674">
    <property type="entry name" value="HD_domain"/>
</dbReference>
<dbReference type="InterPro" id="IPR043519">
    <property type="entry name" value="NT_sf"/>
</dbReference>
<dbReference type="InterPro" id="IPR013546">
    <property type="entry name" value="PII_UdlTrfase/GS_AdlTrfase"/>
</dbReference>
<dbReference type="InterPro" id="IPR002934">
    <property type="entry name" value="Polymerase_NTP_transf_dom"/>
</dbReference>
<dbReference type="InterPro" id="IPR010043">
    <property type="entry name" value="UTase/UR"/>
</dbReference>
<dbReference type="NCBIfam" id="NF002837">
    <property type="entry name" value="PRK03059.1"/>
    <property type="match status" value="1"/>
</dbReference>
<dbReference type="NCBIfam" id="TIGR01693">
    <property type="entry name" value="UTase_glnD"/>
    <property type="match status" value="1"/>
</dbReference>
<dbReference type="PANTHER" id="PTHR47320">
    <property type="entry name" value="BIFUNCTIONAL URIDYLYLTRANSFERASE/URIDYLYL-REMOVING ENZYME"/>
    <property type="match status" value="1"/>
</dbReference>
<dbReference type="PANTHER" id="PTHR47320:SF1">
    <property type="entry name" value="BIFUNCTIONAL URIDYLYLTRANSFERASE_URIDYLYL-REMOVING ENZYME"/>
    <property type="match status" value="1"/>
</dbReference>
<dbReference type="Pfam" id="PF08335">
    <property type="entry name" value="GlnD_UR_UTase"/>
    <property type="match status" value="1"/>
</dbReference>
<dbReference type="Pfam" id="PF01966">
    <property type="entry name" value="HD"/>
    <property type="match status" value="1"/>
</dbReference>
<dbReference type="Pfam" id="PF01909">
    <property type="entry name" value="NTP_transf_2"/>
    <property type="match status" value="1"/>
</dbReference>
<dbReference type="PIRSF" id="PIRSF006288">
    <property type="entry name" value="PII_uridyltransf"/>
    <property type="match status" value="1"/>
</dbReference>
<dbReference type="SMART" id="SM00471">
    <property type="entry name" value="HDc"/>
    <property type="match status" value="1"/>
</dbReference>
<dbReference type="SUPFAM" id="SSF55021">
    <property type="entry name" value="ACT-like"/>
    <property type="match status" value="2"/>
</dbReference>
<dbReference type="SUPFAM" id="SSF109604">
    <property type="entry name" value="HD-domain/PDEase-like"/>
    <property type="match status" value="1"/>
</dbReference>
<dbReference type="SUPFAM" id="SSF81301">
    <property type="entry name" value="Nucleotidyltransferase"/>
    <property type="match status" value="1"/>
</dbReference>
<dbReference type="SUPFAM" id="SSF81593">
    <property type="entry name" value="Nucleotidyltransferase substrate binding subunit/domain"/>
    <property type="match status" value="1"/>
</dbReference>
<dbReference type="PROSITE" id="PS51671">
    <property type="entry name" value="ACT"/>
    <property type="match status" value="2"/>
</dbReference>
<dbReference type="PROSITE" id="PS51831">
    <property type="entry name" value="HD"/>
    <property type="match status" value="1"/>
</dbReference>
<feature type="chain" id="PRO_1000022335" description="Bifunctional uridylyltransferase/uridylyl-removing enzyme">
    <location>
        <begin position="1"/>
        <end position="858"/>
    </location>
</feature>
<feature type="domain" description="HD" evidence="2">
    <location>
        <begin position="443"/>
        <end position="565"/>
    </location>
</feature>
<feature type="domain" description="ACT 1" evidence="1">
    <location>
        <begin position="682"/>
        <end position="761"/>
    </location>
</feature>
<feature type="domain" description="ACT 2" evidence="1">
    <location>
        <begin position="790"/>
        <end position="858"/>
    </location>
</feature>
<feature type="region of interest" description="Uridylyltransferase">
    <location>
        <begin position="1"/>
        <end position="324"/>
    </location>
</feature>
<feature type="region of interest" description="Uridylyl-removing">
    <location>
        <begin position="325"/>
        <end position="681"/>
    </location>
</feature>